<accession>P0AG00</accession>
<accession>P25905</accession>
<accession>P76752</accession>
<accession>Q2M893</accession>
<evidence type="ECO:0000255" key="1">
    <source>
        <dbReference type="HAMAP-Rule" id="MF_02025"/>
    </source>
</evidence>
<evidence type="ECO:0000269" key="2">
    <source>
    </source>
</evidence>
<evidence type="ECO:0000269" key="3">
    <source>
    </source>
</evidence>
<evidence type="ECO:0000269" key="4">
    <source>
    </source>
</evidence>
<evidence type="ECO:0000303" key="5">
    <source>
    </source>
</evidence>
<evidence type="ECO:0000305" key="6"/>
<evidence type="ECO:0000305" key="7">
    <source>
    </source>
</evidence>
<evidence type="ECO:0007829" key="8">
    <source>
        <dbReference type="PDB" id="8P3P"/>
    </source>
</evidence>
<organism>
    <name type="scientific">Escherichia coli (strain K12)</name>
    <dbReference type="NCBI Taxonomy" id="83333"/>
    <lineage>
        <taxon>Bacteria</taxon>
        <taxon>Pseudomonadati</taxon>
        <taxon>Pseudomonadota</taxon>
        <taxon>Gammaproteobacteria</taxon>
        <taxon>Enterobacterales</taxon>
        <taxon>Enterobacteriaceae</taxon>
        <taxon>Escherichia</taxon>
    </lineage>
</organism>
<dbReference type="EMBL" id="M87049">
    <property type="protein sequence ID" value="AAA67585.1"/>
    <property type="status" value="ALT_INIT"/>
    <property type="molecule type" value="Genomic_DNA"/>
</dbReference>
<dbReference type="EMBL" id="M76129">
    <property type="protein sequence ID" value="AAA24527.1"/>
    <property type="molecule type" value="Genomic_DNA"/>
</dbReference>
<dbReference type="EMBL" id="U00096">
    <property type="protein sequence ID" value="AAC76790.2"/>
    <property type="molecule type" value="Genomic_DNA"/>
</dbReference>
<dbReference type="EMBL" id="AP009048">
    <property type="protein sequence ID" value="BAE77513.1"/>
    <property type="molecule type" value="Genomic_DNA"/>
</dbReference>
<dbReference type="PIR" id="D65182">
    <property type="entry name" value="D65182"/>
</dbReference>
<dbReference type="RefSeq" id="NP_418232.2">
    <property type="nucleotide sequence ID" value="NC_000913.3"/>
</dbReference>
<dbReference type="RefSeq" id="WP_001295256.1">
    <property type="nucleotide sequence ID" value="NZ_STEB01000021.1"/>
</dbReference>
<dbReference type="PDB" id="8BHW">
    <property type="method" value="EM"/>
    <property type="resolution" value="3.20 A"/>
    <property type="chains" value="A/B/C/D/E/F/G/H=1-348"/>
</dbReference>
<dbReference type="PDB" id="8P3O">
    <property type="method" value="EM"/>
    <property type="resolution" value="2.90 A"/>
    <property type="chains" value="A/B/C/D/E/F/G/H=1-348"/>
</dbReference>
<dbReference type="PDB" id="8P3P">
    <property type="method" value="EM"/>
    <property type="resolution" value="2.50 A"/>
    <property type="chains" value="A/B/C/D/E/F/G/H=1-348"/>
</dbReference>
<dbReference type="PDBsum" id="8BHW"/>
<dbReference type="PDBsum" id="8P3O"/>
<dbReference type="PDBsum" id="8P3P"/>
<dbReference type="EMDB" id="EMD-16071"/>
<dbReference type="EMDB" id="EMD-16072"/>
<dbReference type="EMDB" id="EMD-16073"/>
<dbReference type="EMDB" id="EMD-17387"/>
<dbReference type="EMDB" id="EMD-17388"/>
<dbReference type="EMDB" id="EMD-17389"/>
<dbReference type="EMDB" id="EMD-17390"/>
<dbReference type="SMR" id="P0AG00"/>
<dbReference type="BioGRID" id="4259698">
    <property type="interactions" value="165"/>
</dbReference>
<dbReference type="FunCoup" id="P0AG00">
    <property type="interactions" value="38"/>
</dbReference>
<dbReference type="STRING" id="511145.b3785"/>
<dbReference type="jPOST" id="P0AG00"/>
<dbReference type="PaxDb" id="511145-b3785"/>
<dbReference type="EnsemblBacteria" id="AAC76790">
    <property type="protein sequence ID" value="AAC76790"/>
    <property type="gene ID" value="b3785"/>
</dbReference>
<dbReference type="GeneID" id="93778159"/>
<dbReference type="GeneID" id="944815"/>
<dbReference type="KEGG" id="ecj:JW5601"/>
<dbReference type="KEGG" id="eco:b3785"/>
<dbReference type="KEGG" id="ecoc:C3026_20495"/>
<dbReference type="PATRIC" id="fig|511145.12.peg.3901"/>
<dbReference type="EchoBASE" id="EB1272"/>
<dbReference type="eggNOG" id="COG3765">
    <property type="taxonomic scope" value="Bacteria"/>
</dbReference>
<dbReference type="HOGENOM" id="CLU_060925_2_1_6"/>
<dbReference type="InParanoid" id="P0AG00"/>
<dbReference type="OMA" id="GLCCTLW"/>
<dbReference type="OrthoDB" id="9775724at2"/>
<dbReference type="PhylomeDB" id="P0AG00"/>
<dbReference type="BioCyc" id="EcoCyc:EG11295-MONOMER"/>
<dbReference type="BioCyc" id="MetaCyc:EG11295-MONOMER"/>
<dbReference type="UniPathway" id="UPA00566"/>
<dbReference type="PRO" id="PR:P0AG00"/>
<dbReference type="Proteomes" id="UP000000625">
    <property type="component" value="Chromosome"/>
</dbReference>
<dbReference type="GO" id="GO:0005886">
    <property type="term" value="C:plasma membrane"/>
    <property type="evidence" value="ECO:0000318"/>
    <property type="project" value="GO_Central"/>
</dbReference>
<dbReference type="GO" id="GO:0004713">
    <property type="term" value="F:protein tyrosine kinase activity"/>
    <property type="evidence" value="ECO:0000318"/>
    <property type="project" value="GO_Central"/>
</dbReference>
<dbReference type="GO" id="GO:0009246">
    <property type="term" value="P:enterobacterial common antigen biosynthetic process"/>
    <property type="evidence" value="ECO:0000315"/>
    <property type="project" value="EcoCyc"/>
</dbReference>
<dbReference type="Gene3D" id="3.30.1890.10">
    <property type="entry name" value="FepE-like"/>
    <property type="match status" value="1"/>
</dbReference>
<dbReference type="HAMAP" id="MF_02025">
    <property type="entry name" value="WzzE"/>
    <property type="match status" value="1"/>
</dbReference>
<dbReference type="InterPro" id="IPR050445">
    <property type="entry name" value="Bact_polysacc_biosynth/exp"/>
</dbReference>
<dbReference type="InterPro" id="IPR003856">
    <property type="entry name" value="LPS_length_determ_N_term"/>
</dbReference>
<dbReference type="InterPro" id="IPR032895">
    <property type="entry name" value="WzzE"/>
</dbReference>
<dbReference type="NCBIfam" id="NF008645">
    <property type="entry name" value="PRK11638.1"/>
    <property type="match status" value="1"/>
</dbReference>
<dbReference type="PANTHER" id="PTHR32309:SF16">
    <property type="entry name" value="ECA POLYSACCHARIDE CHAIN LENGTH MODULATION PROTEIN"/>
    <property type="match status" value="1"/>
</dbReference>
<dbReference type="PANTHER" id="PTHR32309">
    <property type="entry name" value="TYROSINE-PROTEIN KINASE"/>
    <property type="match status" value="1"/>
</dbReference>
<dbReference type="Pfam" id="PF02706">
    <property type="entry name" value="Wzz"/>
    <property type="match status" value="1"/>
</dbReference>
<dbReference type="SUPFAM" id="SSF160355">
    <property type="entry name" value="Bacterial polysaccharide co-polymerase-like"/>
    <property type="match status" value="1"/>
</dbReference>
<sequence>MTQPMPGKPAEDAENELDIRGLFRTLWAGKLWIIGMGLAFALIALAYTFFARQEWSSTAITDRPTVNMLGGYYSQQQFLRNLDVRSNMASADQPSVMDEAYKEFVMQLASWDTRREFWLQTDYYKQRMVGNSKADAALLDEMINNIQFIPGDFTRAVNDSVKLIAETAPDANNLLRQYVAFASQRAASHLNDELKGAWAARTIQMKAQVKRQEEVAKAIYDRRMNSIEQALKIAEQHNISRSATDVPAEELPDSEMFLLGRPMLQARLENLQAVGPAFDLDYDQNRAMLNTLNVGPTLDPRFQTYRYLRTPEEPVKRDSPRRAFLMIMWGIVGGLIGAGVALTRRCSK</sequence>
<keyword id="KW-0002">3D-structure</keyword>
<keyword id="KW-0997">Cell inner membrane</keyword>
<keyword id="KW-1003">Cell membrane</keyword>
<keyword id="KW-0472">Membrane</keyword>
<keyword id="KW-1185">Reference proteome</keyword>
<keyword id="KW-0812">Transmembrane</keyword>
<keyword id="KW-1133">Transmembrane helix</keyword>
<gene>
    <name evidence="1" type="primary">wzzE</name>
    <name evidence="5" type="synonym">wzz</name>
    <name type="synonym">yifC</name>
    <name type="ordered locus">b3785</name>
    <name type="ordered locus">JW5601</name>
</gene>
<feature type="chain" id="PRO_0000065996" description="ECA polysaccharide chain length modulation protein">
    <location>
        <begin position="1"/>
        <end position="348"/>
    </location>
</feature>
<feature type="topological domain" description="Cytoplasmic" evidence="6">
    <location>
        <begin position="1"/>
        <end position="30"/>
    </location>
</feature>
<feature type="transmembrane region" description="Helical" evidence="1">
    <location>
        <begin position="31"/>
        <end position="51"/>
    </location>
</feature>
<feature type="topological domain" description="Periplasmic" evidence="6">
    <location>
        <begin position="52"/>
        <end position="322"/>
    </location>
</feature>
<feature type="transmembrane region" description="Helical" evidence="1">
    <location>
        <begin position="323"/>
        <end position="343"/>
    </location>
</feature>
<feature type="topological domain" description="Cytoplasmic" evidence="3">
    <location>
        <begin position="344"/>
        <end position="348"/>
    </location>
</feature>
<feature type="helix" evidence="8">
    <location>
        <begin position="19"/>
        <end position="23"/>
    </location>
</feature>
<feature type="turn" evidence="8">
    <location>
        <begin position="24"/>
        <end position="29"/>
    </location>
</feature>
<feature type="helix" evidence="8">
    <location>
        <begin position="30"/>
        <end position="49"/>
    </location>
</feature>
<feature type="strand" evidence="8">
    <location>
        <begin position="55"/>
        <end position="62"/>
    </location>
</feature>
<feature type="helix" evidence="8">
    <location>
        <begin position="67"/>
        <end position="69"/>
    </location>
</feature>
<feature type="helix" evidence="8">
    <location>
        <begin position="72"/>
        <end position="85"/>
    </location>
</feature>
<feature type="helix" evidence="8">
    <location>
        <begin position="96"/>
        <end position="108"/>
    </location>
</feature>
<feature type="helix" evidence="8">
    <location>
        <begin position="111"/>
        <end position="119"/>
    </location>
</feature>
<feature type="strand" evidence="8">
    <location>
        <begin position="121"/>
        <end position="123"/>
    </location>
</feature>
<feature type="turn" evidence="8">
    <location>
        <begin position="124"/>
        <end position="127"/>
    </location>
</feature>
<feature type="helix" evidence="8">
    <location>
        <begin position="132"/>
        <end position="145"/>
    </location>
</feature>
<feature type="strand" evidence="8">
    <location>
        <begin position="147"/>
        <end position="149"/>
    </location>
</feature>
<feature type="helix" evidence="8">
    <location>
        <begin position="153"/>
        <end position="155"/>
    </location>
</feature>
<feature type="strand" evidence="8">
    <location>
        <begin position="160"/>
        <end position="167"/>
    </location>
</feature>
<feature type="helix" evidence="8">
    <location>
        <begin position="168"/>
        <end position="237"/>
    </location>
</feature>
<feature type="turn" evidence="8">
    <location>
        <begin position="238"/>
        <end position="241"/>
    </location>
</feature>
<feature type="helix" evidence="8">
    <location>
        <begin position="246"/>
        <end position="248"/>
    </location>
</feature>
<feature type="turn" evidence="8">
    <location>
        <begin position="255"/>
        <end position="258"/>
    </location>
</feature>
<feature type="helix" evidence="8">
    <location>
        <begin position="261"/>
        <end position="274"/>
    </location>
</feature>
<feature type="helix" evidence="8">
    <location>
        <begin position="280"/>
        <end position="293"/>
    </location>
</feature>
<feature type="strand" evidence="8">
    <location>
        <begin position="306"/>
        <end position="309"/>
    </location>
</feature>
<feature type="helix" evidence="8">
    <location>
        <begin position="322"/>
        <end position="345"/>
    </location>
</feature>
<name>WZZE_ECOLI</name>
<reference key="1">
    <citation type="journal article" date="1992" name="J. Biol. Chem.">
        <title>Nucleotide sequence of the Escherichia coli rfe gene involved in the synthesis of enterobacterial common antigen. Molecular cloning of the rfe-rff gene cluster.</title>
        <authorList>
            <person name="Meier-Dieter U."/>
            <person name="Barr K."/>
            <person name="Starman R."/>
            <person name="Hatch L."/>
            <person name="Rick P.D."/>
        </authorList>
    </citation>
    <scope>NUCLEOTIDE SEQUENCE [GENOMIC DNA]</scope>
    <source>
        <strain>K12</strain>
    </source>
</reference>
<reference key="2">
    <citation type="journal article" date="1992" name="Science">
        <title>Analysis of the Escherichia coli genome: DNA sequence of the region from 84.5 to 86.5 minutes.</title>
        <authorList>
            <person name="Daniels D.L."/>
            <person name="Plunkett G. III"/>
            <person name="Burland V.D."/>
            <person name="Blattner F.R."/>
        </authorList>
    </citation>
    <scope>NUCLEOTIDE SEQUENCE [LARGE SCALE GENOMIC DNA]</scope>
    <source>
        <strain>K12 / MG1655 / ATCC 47076</strain>
    </source>
</reference>
<reference key="3">
    <citation type="journal article" date="1997" name="Science">
        <title>The complete genome sequence of Escherichia coli K-12.</title>
        <authorList>
            <person name="Blattner F.R."/>
            <person name="Plunkett G. III"/>
            <person name="Bloch C.A."/>
            <person name="Perna N.T."/>
            <person name="Burland V."/>
            <person name="Riley M."/>
            <person name="Collado-Vides J."/>
            <person name="Glasner J.D."/>
            <person name="Rode C.K."/>
            <person name="Mayhew G.F."/>
            <person name="Gregor J."/>
            <person name="Davis N.W."/>
            <person name="Kirkpatrick H.A."/>
            <person name="Goeden M.A."/>
            <person name="Rose D.J."/>
            <person name="Mau B."/>
            <person name="Shao Y."/>
        </authorList>
    </citation>
    <scope>NUCLEOTIDE SEQUENCE [LARGE SCALE GENOMIC DNA]</scope>
    <source>
        <strain>K12 / MG1655 / ATCC 47076</strain>
    </source>
</reference>
<reference key="4">
    <citation type="journal article" date="2006" name="Mol. Syst. Biol.">
        <title>Highly accurate genome sequences of Escherichia coli K-12 strains MG1655 and W3110.</title>
        <authorList>
            <person name="Hayashi K."/>
            <person name="Morooka N."/>
            <person name="Yamamoto Y."/>
            <person name="Fujita K."/>
            <person name="Isono K."/>
            <person name="Choi S."/>
            <person name="Ohtsubo E."/>
            <person name="Baba T."/>
            <person name="Wanner B.L."/>
            <person name="Mori H."/>
            <person name="Horiuchi T."/>
        </authorList>
    </citation>
    <scope>NUCLEOTIDE SEQUENCE [LARGE SCALE GENOMIC DNA]</scope>
    <source>
        <strain>K12 / W3110 / ATCC 27325 / DSM 5911</strain>
    </source>
</reference>
<reference key="5">
    <citation type="journal article" date="1999" name="J. Bacteriol.">
        <title>The modality of enterobacterial common antigen polysaccharide chain lengths is regulated by o349 of the wec gene cluster of Escherichia coli K-12.</title>
        <authorList>
            <person name="Barr K."/>
            <person name="Klena J."/>
            <person name="Rick P.D."/>
        </authorList>
    </citation>
    <scope>FUNCTION</scope>
    <scope>PATHWAY</scope>
</reference>
<reference key="6">
    <citation type="journal article" date="2005" name="J. Bacteriol.">
        <title>Assembly of cyclic enterobacterial common antigen in Escherichia coli K-12.</title>
        <authorList>
            <person name="Kajimura J."/>
            <person name="Rahman A."/>
            <person name="Rick P.D."/>
        </authorList>
    </citation>
    <scope>FUNCTION</scope>
    <scope>PATHWAY</scope>
    <scope>DISRUPTION PHENOTYPE</scope>
    <source>
        <strain>K12</strain>
    </source>
</reference>
<reference key="7">
    <citation type="journal article" date="2005" name="Science">
        <title>Global topology analysis of the Escherichia coli inner membrane proteome.</title>
        <authorList>
            <person name="Daley D.O."/>
            <person name="Rapp M."/>
            <person name="Granseth E."/>
            <person name="Melen K."/>
            <person name="Drew D."/>
            <person name="von Heijne G."/>
        </authorList>
    </citation>
    <scope>TOPOLOGY [LARGE SCALE ANALYSIS]</scope>
    <source>
        <strain>K12 / MG1655 / ATCC 47076</strain>
    </source>
</reference>
<reference key="8">
    <citation type="journal article" date="2006" name="J. Bacteriol.">
        <title>Interplay of the Wzx translocase and the corresponding polymerase and chain length regulator proteins in the translocation and periplasmic assembly of lipopolysaccharide o antigen.</title>
        <authorList>
            <person name="Marolda C.L."/>
            <person name="Tatar L.D."/>
            <person name="Alaimo C."/>
            <person name="Aebi M."/>
            <person name="Valvano M.A."/>
        </authorList>
    </citation>
    <scope>SUBUNIT</scope>
</reference>
<protein>
    <recommendedName>
        <fullName evidence="1 6">ECA polysaccharide chain length modulation protein</fullName>
    </recommendedName>
</protein>
<comment type="function">
    <text evidence="2 4">Modulates the polysaccharide chain length of enterobacterial common antigen (ECA). Required for the assembly of the phosphoglyceride-linked form of ECA (ECA(PG)) and the water-soluble cyclic form of ECA (ECA(CYC)).</text>
</comment>
<comment type="pathway">
    <text evidence="1 2 4">Bacterial outer membrane biogenesis; enterobacterial common antigen biosynthesis.</text>
</comment>
<comment type="subunit">
    <text evidence="1 7">Probably part of a complex composed of WzxE, WzyE and WzzE.</text>
</comment>
<comment type="subcellular location">
    <subcellularLocation>
        <location evidence="1 6">Cell inner membrane</location>
        <topology evidence="1">Multi-pass membrane protein</topology>
    </subcellularLocation>
</comment>
<comment type="disruption phenotype">
    <text evidence="4">Null mutation abolishes ECA(CYC) synthesis.</text>
</comment>
<comment type="similarity">
    <text evidence="1">Belongs to the WzzB/Cld/Rol family.</text>
</comment>
<comment type="sequence caution" evidence="6">
    <conflict type="erroneous initiation">
        <sequence resource="EMBL-CDS" id="AAA67585"/>
    </conflict>
    <text>Extended N-terminus.</text>
</comment>
<proteinExistence type="evidence at protein level"/>